<protein>
    <recommendedName>
        <fullName>Universal stress protein A homolog 1</fullName>
    </recommendedName>
</protein>
<feature type="chain" id="PRO_0000322124" description="Universal stress protein A homolog 1">
    <location>
        <begin position="1"/>
        <end position="144"/>
    </location>
</feature>
<proteinExistence type="inferred from homology"/>
<gene>
    <name type="primary">uspA1</name>
    <name type="ordered locus">CBU_1983</name>
</gene>
<reference key="1">
    <citation type="journal article" date="2003" name="Proc. Natl. Acad. Sci. U.S.A.">
        <title>Complete genome sequence of the Q-fever pathogen, Coxiella burnetii.</title>
        <authorList>
            <person name="Seshadri R."/>
            <person name="Paulsen I.T."/>
            <person name="Eisen J.A."/>
            <person name="Read T.D."/>
            <person name="Nelson K.E."/>
            <person name="Nelson W.C."/>
            <person name="Ward N.L."/>
            <person name="Tettelin H."/>
            <person name="Davidsen T.M."/>
            <person name="Beanan M.J."/>
            <person name="DeBoy R.T."/>
            <person name="Daugherty S.C."/>
            <person name="Brinkac L.M."/>
            <person name="Madupu R."/>
            <person name="Dodson R.J."/>
            <person name="Khouri H.M."/>
            <person name="Lee K.H."/>
            <person name="Carty H.A."/>
            <person name="Scanlan D."/>
            <person name="Heinzen R.A."/>
            <person name="Thompson H.A."/>
            <person name="Samuel J.E."/>
            <person name="Fraser C.M."/>
            <person name="Heidelberg J.F."/>
        </authorList>
    </citation>
    <scope>NUCLEOTIDE SEQUENCE [LARGE SCALE GENOMIC DNA]</scope>
    <source>
        <strain>RSA 493 / Nine Mile phase I</strain>
    </source>
</reference>
<keyword id="KW-0963">Cytoplasm</keyword>
<keyword id="KW-1185">Reference proteome</keyword>
<dbReference type="EMBL" id="AE016828">
    <property type="protein sequence ID" value="AAO91472.1"/>
    <property type="molecule type" value="Genomic_DNA"/>
</dbReference>
<dbReference type="RefSeq" id="WP_010958580.1">
    <property type="nucleotide sequence ID" value="NC_002971.4"/>
</dbReference>
<dbReference type="SMR" id="Q83AC1"/>
<dbReference type="STRING" id="227377.CBU_1983"/>
<dbReference type="EnsemblBacteria" id="AAO91472">
    <property type="protein sequence ID" value="AAO91472"/>
    <property type="gene ID" value="CBU_1983"/>
</dbReference>
<dbReference type="KEGG" id="cbu:CBU_1983"/>
<dbReference type="PATRIC" id="fig|227377.7.peg.1970"/>
<dbReference type="eggNOG" id="COG0589">
    <property type="taxonomic scope" value="Bacteria"/>
</dbReference>
<dbReference type="HOGENOM" id="CLU_049301_11_3_6"/>
<dbReference type="OrthoDB" id="9792500at2"/>
<dbReference type="Proteomes" id="UP000002671">
    <property type="component" value="Chromosome"/>
</dbReference>
<dbReference type="GO" id="GO:0005737">
    <property type="term" value="C:cytoplasm"/>
    <property type="evidence" value="ECO:0007669"/>
    <property type="project" value="UniProtKB-SubCell"/>
</dbReference>
<dbReference type="GO" id="GO:0006950">
    <property type="term" value="P:response to stress"/>
    <property type="evidence" value="ECO:0000318"/>
    <property type="project" value="GO_Central"/>
</dbReference>
<dbReference type="CDD" id="cd23657">
    <property type="entry name" value="USP-A-like"/>
    <property type="match status" value="1"/>
</dbReference>
<dbReference type="Gene3D" id="3.40.50.620">
    <property type="entry name" value="HUPs"/>
    <property type="match status" value="1"/>
</dbReference>
<dbReference type="InterPro" id="IPR014729">
    <property type="entry name" value="Rossmann-like_a/b/a_fold"/>
</dbReference>
<dbReference type="InterPro" id="IPR006015">
    <property type="entry name" value="Universal_stress_UspA"/>
</dbReference>
<dbReference type="InterPro" id="IPR006016">
    <property type="entry name" value="UspA"/>
</dbReference>
<dbReference type="PANTHER" id="PTHR46268">
    <property type="entry name" value="STRESS RESPONSE PROTEIN NHAX"/>
    <property type="match status" value="1"/>
</dbReference>
<dbReference type="PANTHER" id="PTHR46268:SF23">
    <property type="entry name" value="UNIVERSAL STRESS PROTEIN A-RELATED"/>
    <property type="match status" value="1"/>
</dbReference>
<dbReference type="Pfam" id="PF00582">
    <property type="entry name" value="Usp"/>
    <property type="match status" value="1"/>
</dbReference>
<dbReference type="PIRSF" id="PIRSF006276">
    <property type="entry name" value="UspA"/>
    <property type="match status" value="1"/>
</dbReference>
<dbReference type="PRINTS" id="PR01438">
    <property type="entry name" value="UNVRSLSTRESS"/>
</dbReference>
<dbReference type="SUPFAM" id="SSF52402">
    <property type="entry name" value="Adenine nucleotide alpha hydrolases-like"/>
    <property type="match status" value="1"/>
</dbReference>
<sequence length="144" mass="15746">MHYKHILAAIDLSPRSQEVIDRAAEVAASNNATLDVVHVIEHSPVAYGGEFSIPINVNLEQTIESEARKALTELCHTVKVPSERQHTLSGVVKHMVIELAEKLNIDLIVVGTHGHHGLDKLLGSRANAILHVATCDVLAVWMKE</sequence>
<evidence type="ECO:0000250" key="1"/>
<evidence type="ECO:0000305" key="2"/>
<accession>Q83AC1</accession>
<name>USPA1_COXBU</name>
<comment type="function">
    <text evidence="1">Involved in stress response.</text>
</comment>
<comment type="subunit">
    <text evidence="1">Homodimer.</text>
</comment>
<comment type="subcellular location">
    <subcellularLocation>
        <location evidence="1">Cytoplasm</location>
    </subcellularLocation>
</comment>
<comment type="similarity">
    <text evidence="2">Belongs to the universal stress protein A family.</text>
</comment>
<organism>
    <name type="scientific">Coxiella burnetii (strain RSA 493 / Nine Mile phase I)</name>
    <dbReference type="NCBI Taxonomy" id="227377"/>
    <lineage>
        <taxon>Bacteria</taxon>
        <taxon>Pseudomonadati</taxon>
        <taxon>Pseudomonadota</taxon>
        <taxon>Gammaproteobacteria</taxon>
        <taxon>Legionellales</taxon>
        <taxon>Coxiellaceae</taxon>
        <taxon>Coxiella</taxon>
    </lineage>
</organism>